<reference key="1">
    <citation type="journal article" date="2016" name="Genome Announc.">
        <title>Draft genome sequences of fungus Aspergillus calidoustus.</title>
        <authorList>
            <person name="Horn F."/>
            <person name="Linde J."/>
            <person name="Mattern D.J."/>
            <person name="Walther G."/>
            <person name="Guthke R."/>
            <person name="Scherlach K."/>
            <person name="Martin K."/>
            <person name="Brakhage A.A."/>
            <person name="Petzke L."/>
            <person name="Valiante V."/>
        </authorList>
    </citation>
    <scope>NUCLEOTIDE SEQUENCE [LARGE SCALE GENOMIC DNA]</scope>
    <source>
        <strain>SF006504</strain>
    </source>
</reference>
<reference key="2">
    <citation type="journal article" date="2017" name="ACS Chem. Biol.">
        <title>Discovery of an Extended Austinoid Biosynthetic Pathway in Aspergillus calidoustus.</title>
        <authorList>
            <person name="Valiante V."/>
            <person name="Mattern D.J."/>
            <person name="Schueffler A."/>
            <person name="Horn F."/>
            <person name="Walther G."/>
            <person name="Scherlach K."/>
            <person name="Petzke L."/>
            <person name="Dickhaut J."/>
            <person name="Guthke R."/>
            <person name="Hertweck C."/>
            <person name="Nett M."/>
            <person name="Thines E."/>
            <person name="Brakhage A.A."/>
        </authorList>
    </citation>
    <scope>FUNCTION</scope>
    <scope>PATHWAY</scope>
</reference>
<reference key="3">
    <citation type="journal article" date="2017" name="ACS Chem. Biol.">
        <title>Rewiring of the austinoid biosynthetic pathway in filamentous fungi.</title>
        <authorList>
            <person name="Mattern D.J."/>
            <person name="Valiante V."/>
            <person name="Horn F."/>
            <person name="Petzke L."/>
            <person name="Brakhage A.A."/>
        </authorList>
    </citation>
    <scope>FUNCTION</scope>
</reference>
<organism>
    <name type="scientific">Aspergillus calidoustus</name>
    <dbReference type="NCBI Taxonomy" id="454130"/>
    <lineage>
        <taxon>Eukaryota</taxon>
        <taxon>Fungi</taxon>
        <taxon>Dikarya</taxon>
        <taxon>Ascomycota</taxon>
        <taxon>Pezizomycotina</taxon>
        <taxon>Eurotiomycetes</taxon>
        <taxon>Eurotiomycetidae</taxon>
        <taxon>Eurotiales</taxon>
        <taxon>Aspergillaceae</taxon>
        <taxon>Aspergillus</taxon>
        <taxon>Aspergillus subgen. Nidulantes</taxon>
    </lineage>
</organism>
<comment type="function">
    <text evidence="1 4 5">Part of the gene cluster that mediates the biosynthesis of calidodehydroaustin, a fungal meroterpenoid (PubMed:28233494, PubMed:29076725). The first step of the pathway is the synthesis of 3,5-dimethylorsellinic acid by the polyketide synthase ausA (PubMed:28233494). 3,5-dimethylorsellinic acid is then prenylated by the polyprenyl transferase ausN (PubMed:28233494). Further epoxidation by the FAD-dependent monooxygenase ausM and cyclization by the probable terpene cyclase ausL lead to the formation of protoaustinoid A (By similarity). Protoaustinoid A is then oxidized to spiro-lactone preaustinoid A3 by the combined action of the FAD-binding monooxygenases ausB and ausC, and the dioxygenase ausE (By similarity). Acid-catalyzed keto-rearrangement and ring contraction of the tetraketide portion of preaustinoid A3 by ausJ lead to the formation of preaustinoid A4 (By similarity). The aldo-keto reductase ausK, with the help of ausH, is involved in the next step by transforming preaustinoid A4 into isoaustinone which is in turn hydroxylated by the P450 monooxygenase ausI to form austinolide (By similarity). The cytochrome P450 monooxygenase ausG modifies austinolide to austinol (By similarity). Austinol is further acetylated to austin by the O-acetyltransferase ausP, which spontaneously changes to dehydroaustin (PubMed:28233494). The cytochrome P450 monooxygenase ausR then converts dehydroaustin is into 7-dehydrodehydroaustin (PubMed:28233494). The hydroxylation catalyzed by ausR permits the O-acetyltransferase ausQ to add an additional acetyl group to the molecule, leading to the formation of acetoxydehydroaustin (PubMed:28233494). The short chain dehydrogenase ausT catalyzes the reduction of the double bond present between carbon atoms 1 and 2 to convert 7-dehydrodehydroaustin into 1,2-dihydro-7-hydroxydehydroaustin (PubMed:28233494). AusQ catalyzes not only an acetylation reaction but also the addition of the PKS ausV diketide product to 1,2-dihydro-7-hydroxydehydroaustin, forming precalidodehydroaustin (PubMed:28233494). Finally, the iron/alpha-ketoglutarate-dependent dioxygenase converts precalidodehydroaustin into calidodehydroaustin (PubMed:28233494).</text>
</comment>
<comment type="pathway">
    <text evidence="7">Secondary metabolite biosynthesis; terpenoid biosynthesis.</text>
</comment>
<comment type="miscellaneous">
    <text evidence="8">In A.calidoustus, the austinoid gene cluster lies on a contiguous DNA region, while clusters from E.nidulans and P.brasilianum are split in their respective genomes. Genetic rearrangements provoked variability among the clusters and E.nidulans produces the least number of austionoid derivatives with the end products austinol and dehydroaustinol, while P.brasilianum can produce until acetoxydehydroaustin, and A.calidoustus produces the highest number of identified derivatives.</text>
</comment>
<accession>A0A0U5GHH9</accession>
<proteinExistence type="inferred from homology"/>
<gene>
    <name evidence="6" type="primary">ausW</name>
    <name type="ORF">ASPCAL14370</name>
</gene>
<feature type="signal peptide" evidence="2">
    <location>
        <begin position="1"/>
        <end position="19"/>
    </location>
</feature>
<feature type="chain" id="PRO_5006857884" description="Austinoid biosynthesis cluster protein W">
    <location>
        <begin position="20"/>
        <end position="536"/>
    </location>
</feature>
<feature type="region of interest" description="Disordered" evidence="3">
    <location>
        <begin position="141"/>
        <end position="164"/>
    </location>
</feature>
<feature type="region of interest" description="Disordered" evidence="3">
    <location>
        <begin position="185"/>
        <end position="220"/>
    </location>
</feature>
<feature type="region of interest" description="Disordered" evidence="3">
    <location>
        <begin position="261"/>
        <end position="302"/>
    </location>
</feature>
<feature type="region of interest" description="Disordered" evidence="3">
    <location>
        <begin position="385"/>
        <end position="423"/>
    </location>
</feature>
<feature type="region of interest" description="Disordered" evidence="3">
    <location>
        <begin position="491"/>
        <end position="536"/>
    </location>
</feature>
<feature type="compositionally biased region" description="Low complexity" evidence="3">
    <location>
        <begin position="195"/>
        <end position="208"/>
    </location>
</feature>
<feature type="compositionally biased region" description="Gly residues" evidence="3">
    <location>
        <begin position="209"/>
        <end position="220"/>
    </location>
</feature>
<feature type="compositionally biased region" description="Low complexity" evidence="3">
    <location>
        <begin position="287"/>
        <end position="302"/>
    </location>
</feature>
<feature type="compositionally biased region" description="Low complexity" evidence="3">
    <location>
        <begin position="408"/>
        <end position="423"/>
    </location>
</feature>
<sequence>MKHPTVALLGVGMLGCAAALPAGQVANGAQDDPVPAARTAPATAATAPADFGATSDPSIAGTGFPGLAGFPGFPGSGAAQAGPVHAPSTFGPAAGPAGFQGLSGGPGFAFPGFGGGSGFGFTGFGGMSAFPGIPGFGGLQGSAPSQAAAAPSTGDSRSGLPGFPGVSGGSGFGFPSFGGMSASPSLPGFGGLQGSGPSQAAAAPSTGDSGSGLPGSPGFSGGSGFGFPGFGGMSAGGGAPSTMGFPGFPGFTGFPGMTGGFGVPGSAPDQGASTPAQAASFPAAGRAGNAIPSASSAPASNGMGAAASLHNLQARQFVGTTGHGMVPPAXGSGLPGSPGFSGGSGFGFPGFGGMSAGGGAPSTMGFPGFPGFTGFPGMTGGFGVPGSAPDQGASTPAQAASFPAAGRAGNAIPSASSAPASNGMGAAASLHNLQARQFVGTTGHGMVPPAFHYMFGWPPVIPSAAGAMPNLGTGFNADAFGAEFLGGGEMPSPTSTAASVAPTANSVPATGTAEASTSTPVASAATSAVSATSSAE</sequence>
<name>AUSW_ASPCI</name>
<evidence type="ECO:0000250" key="1">
    <source>
        <dbReference type="UniProtKB" id="Q5ATJ7"/>
    </source>
</evidence>
<evidence type="ECO:0000255" key="2"/>
<evidence type="ECO:0000256" key="3">
    <source>
        <dbReference type="SAM" id="MobiDB-lite"/>
    </source>
</evidence>
<evidence type="ECO:0000269" key="4">
    <source>
    </source>
</evidence>
<evidence type="ECO:0000269" key="5">
    <source>
    </source>
</evidence>
<evidence type="ECO:0000303" key="6">
    <source>
    </source>
</evidence>
<evidence type="ECO:0000305" key="7">
    <source>
    </source>
</evidence>
<evidence type="ECO:0000305" key="8">
    <source>
    </source>
</evidence>
<dbReference type="EMBL" id="CDMC01000024">
    <property type="protein sequence ID" value="CEL11267.1"/>
    <property type="molecule type" value="Genomic_DNA"/>
</dbReference>
<dbReference type="STRING" id="454130.A0A0U5GHH9"/>
<dbReference type="OMA" id="QGFPGDD"/>
<dbReference type="OrthoDB" id="10676774at2759"/>
<dbReference type="UniPathway" id="UPA00213"/>
<dbReference type="Proteomes" id="UP000054771">
    <property type="component" value="Unassembled WGS sequence"/>
</dbReference>
<dbReference type="GO" id="GO:0016114">
    <property type="term" value="P:terpenoid biosynthetic process"/>
    <property type="evidence" value="ECO:0007669"/>
    <property type="project" value="UniProtKB-UniPathway"/>
</dbReference>
<protein>
    <recommendedName>
        <fullName evidence="6">Austinoid biosynthesis cluster protein W</fullName>
    </recommendedName>
</protein>
<keyword id="KW-1185">Reference proteome</keyword>
<keyword id="KW-0732">Signal</keyword>